<feature type="chain" id="PRO_0000235458" description="Phospho-N-acetylmuramoyl-pentapeptide-transferase">
    <location>
        <begin position="1"/>
        <end position="360"/>
    </location>
</feature>
<feature type="transmembrane region" description="Helical" evidence="1">
    <location>
        <begin position="24"/>
        <end position="44"/>
    </location>
</feature>
<feature type="transmembrane region" description="Helical" evidence="1">
    <location>
        <begin position="69"/>
        <end position="89"/>
    </location>
</feature>
<feature type="transmembrane region" description="Helical" evidence="1">
    <location>
        <begin position="92"/>
        <end position="112"/>
    </location>
</feature>
<feature type="transmembrane region" description="Helical" evidence="1">
    <location>
        <begin position="133"/>
        <end position="153"/>
    </location>
</feature>
<feature type="transmembrane region" description="Helical" evidence="1">
    <location>
        <begin position="158"/>
        <end position="178"/>
    </location>
</feature>
<feature type="transmembrane region" description="Helical" evidence="1">
    <location>
        <begin position="199"/>
        <end position="219"/>
    </location>
</feature>
<feature type="transmembrane region" description="Helical" evidence="1">
    <location>
        <begin position="239"/>
        <end position="259"/>
    </location>
</feature>
<feature type="transmembrane region" description="Helical" evidence="1">
    <location>
        <begin position="263"/>
        <end position="283"/>
    </location>
</feature>
<feature type="transmembrane region" description="Helical" evidence="1">
    <location>
        <begin position="288"/>
        <end position="308"/>
    </location>
</feature>
<feature type="transmembrane region" description="Helical" evidence="1">
    <location>
        <begin position="337"/>
        <end position="357"/>
    </location>
</feature>
<gene>
    <name evidence="1" type="primary">mraY</name>
    <name type="ordered locus">NGO_1537</name>
</gene>
<evidence type="ECO:0000255" key="1">
    <source>
        <dbReference type="HAMAP-Rule" id="MF_00038"/>
    </source>
</evidence>
<accession>Q5F6L4</accession>
<comment type="function">
    <text evidence="1">Catalyzes the initial step of the lipid cycle reactions in the biosynthesis of the cell wall peptidoglycan: transfers peptidoglycan precursor phospho-MurNAc-pentapeptide from UDP-MurNAc-pentapeptide onto the lipid carrier undecaprenyl phosphate, yielding undecaprenyl-pyrophosphoryl-MurNAc-pentapeptide, known as lipid I.</text>
</comment>
<comment type="catalytic activity">
    <reaction evidence="1">
        <text>UDP-N-acetyl-alpha-D-muramoyl-L-alanyl-gamma-D-glutamyl-meso-2,6-diaminopimeloyl-D-alanyl-D-alanine + di-trans,octa-cis-undecaprenyl phosphate = di-trans,octa-cis-undecaprenyl diphospho-N-acetyl-alpha-D-muramoyl-L-alanyl-D-glutamyl-meso-2,6-diaminopimeloyl-D-alanyl-D-alanine + UMP</text>
        <dbReference type="Rhea" id="RHEA:28386"/>
        <dbReference type="ChEBI" id="CHEBI:57865"/>
        <dbReference type="ChEBI" id="CHEBI:60392"/>
        <dbReference type="ChEBI" id="CHEBI:61386"/>
        <dbReference type="ChEBI" id="CHEBI:61387"/>
        <dbReference type="EC" id="2.7.8.13"/>
    </reaction>
</comment>
<comment type="cofactor">
    <cofactor evidence="1">
        <name>Mg(2+)</name>
        <dbReference type="ChEBI" id="CHEBI:18420"/>
    </cofactor>
</comment>
<comment type="pathway">
    <text evidence="1">Cell wall biogenesis; peptidoglycan biosynthesis.</text>
</comment>
<comment type="subcellular location">
    <subcellularLocation>
        <location evidence="1">Cell inner membrane</location>
        <topology evidence="1">Multi-pass membrane protein</topology>
    </subcellularLocation>
</comment>
<comment type="similarity">
    <text evidence="1">Belongs to the glycosyltransferase 4 family. MraY subfamily.</text>
</comment>
<sequence length="360" mass="39346">MFLWLAHFSNWLTGLNIFQYTTFRAVMAALTALAFSLMFGPWTIRRLTALKCGQAVRTDGPQTHLVKNGTPTMGGSLILTAITVSTLLWGNWANPYIWILLGVLLATGALGFYDDWRKVVYKDPNGVSAKFKMVWQSSVAVIAGLALFYLAANSANNILIVPFFKQIALPLGVVGFLVLSYLTIVGTSNAVNLTDGLDGLAAFPVVLVAAGLAIFAYVSGHYQFSQYLQLPYVAGANEVAIFCTAMCGACLGFLWFNAYPAQVFMGDVGALALGAALGTVAVIVRQEFVLVIMGGLFVVEAVSVMLQVGWYKKTKKRIFLMAPIHHHYEQKGWKETQVVVRFWIITIVLVLIGLSTLKIR</sequence>
<name>MRAY_NEIG1</name>
<organism>
    <name type="scientific">Neisseria gonorrhoeae (strain ATCC 700825 / FA 1090)</name>
    <dbReference type="NCBI Taxonomy" id="242231"/>
    <lineage>
        <taxon>Bacteria</taxon>
        <taxon>Pseudomonadati</taxon>
        <taxon>Pseudomonadota</taxon>
        <taxon>Betaproteobacteria</taxon>
        <taxon>Neisseriales</taxon>
        <taxon>Neisseriaceae</taxon>
        <taxon>Neisseria</taxon>
    </lineage>
</organism>
<proteinExistence type="inferred from homology"/>
<protein>
    <recommendedName>
        <fullName evidence="1">Phospho-N-acetylmuramoyl-pentapeptide-transferase</fullName>
        <ecNumber evidence="1">2.7.8.13</ecNumber>
    </recommendedName>
    <alternativeName>
        <fullName evidence="1">UDP-MurNAc-pentapeptide phosphotransferase</fullName>
    </alternativeName>
</protein>
<dbReference type="EC" id="2.7.8.13" evidence="1"/>
<dbReference type="EMBL" id="AE004969">
    <property type="protein sequence ID" value="AAW90173.1"/>
    <property type="molecule type" value="Genomic_DNA"/>
</dbReference>
<dbReference type="RefSeq" id="WP_003689450.1">
    <property type="nucleotide sequence ID" value="NC_002946.2"/>
</dbReference>
<dbReference type="RefSeq" id="YP_208585.1">
    <property type="nucleotide sequence ID" value="NC_002946.2"/>
</dbReference>
<dbReference type="SMR" id="Q5F6L4"/>
<dbReference type="STRING" id="242231.NGO_1537"/>
<dbReference type="GeneID" id="66753743"/>
<dbReference type="KEGG" id="ngo:NGO_1537"/>
<dbReference type="PATRIC" id="fig|242231.10.peg.1833"/>
<dbReference type="HOGENOM" id="CLU_023982_0_0_4"/>
<dbReference type="UniPathway" id="UPA00219"/>
<dbReference type="Proteomes" id="UP000000535">
    <property type="component" value="Chromosome"/>
</dbReference>
<dbReference type="GO" id="GO:0005886">
    <property type="term" value="C:plasma membrane"/>
    <property type="evidence" value="ECO:0007669"/>
    <property type="project" value="UniProtKB-SubCell"/>
</dbReference>
<dbReference type="GO" id="GO:0046872">
    <property type="term" value="F:metal ion binding"/>
    <property type="evidence" value="ECO:0007669"/>
    <property type="project" value="UniProtKB-KW"/>
</dbReference>
<dbReference type="GO" id="GO:0008963">
    <property type="term" value="F:phospho-N-acetylmuramoyl-pentapeptide-transferase activity"/>
    <property type="evidence" value="ECO:0007669"/>
    <property type="project" value="UniProtKB-UniRule"/>
</dbReference>
<dbReference type="GO" id="GO:0051992">
    <property type="term" value="F:UDP-N-acetylmuramoyl-L-alanyl-D-glutamyl-meso-2,6-diaminopimelyl-D-alanyl-D-alanine:undecaprenyl-phosphate transferase activity"/>
    <property type="evidence" value="ECO:0007669"/>
    <property type="project" value="RHEA"/>
</dbReference>
<dbReference type="GO" id="GO:0051301">
    <property type="term" value="P:cell division"/>
    <property type="evidence" value="ECO:0007669"/>
    <property type="project" value="UniProtKB-KW"/>
</dbReference>
<dbReference type="GO" id="GO:0071555">
    <property type="term" value="P:cell wall organization"/>
    <property type="evidence" value="ECO:0007669"/>
    <property type="project" value="UniProtKB-KW"/>
</dbReference>
<dbReference type="GO" id="GO:0009252">
    <property type="term" value="P:peptidoglycan biosynthetic process"/>
    <property type="evidence" value="ECO:0007669"/>
    <property type="project" value="UniProtKB-UniRule"/>
</dbReference>
<dbReference type="GO" id="GO:0008360">
    <property type="term" value="P:regulation of cell shape"/>
    <property type="evidence" value="ECO:0007669"/>
    <property type="project" value="UniProtKB-KW"/>
</dbReference>
<dbReference type="CDD" id="cd06852">
    <property type="entry name" value="GT_MraY"/>
    <property type="match status" value="1"/>
</dbReference>
<dbReference type="HAMAP" id="MF_00038">
    <property type="entry name" value="MraY"/>
    <property type="match status" value="1"/>
</dbReference>
<dbReference type="InterPro" id="IPR000715">
    <property type="entry name" value="Glycosyl_transferase_4"/>
</dbReference>
<dbReference type="InterPro" id="IPR003524">
    <property type="entry name" value="PNAcMuramoyl-5peptid_Trfase"/>
</dbReference>
<dbReference type="InterPro" id="IPR018480">
    <property type="entry name" value="PNAcMuramoyl-5peptid_Trfase_CS"/>
</dbReference>
<dbReference type="NCBIfam" id="TIGR00445">
    <property type="entry name" value="mraY"/>
    <property type="match status" value="1"/>
</dbReference>
<dbReference type="PANTHER" id="PTHR22926">
    <property type="entry name" value="PHOSPHO-N-ACETYLMURAMOYL-PENTAPEPTIDE-TRANSFERASE"/>
    <property type="match status" value="1"/>
</dbReference>
<dbReference type="PANTHER" id="PTHR22926:SF5">
    <property type="entry name" value="PHOSPHO-N-ACETYLMURAMOYL-PENTAPEPTIDE-TRANSFERASE HOMOLOG"/>
    <property type="match status" value="1"/>
</dbReference>
<dbReference type="Pfam" id="PF00953">
    <property type="entry name" value="Glycos_transf_4"/>
    <property type="match status" value="1"/>
</dbReference>
<dbReference type="PROSITE" id="PS01347">
    <property type="entry name" value="MRAY_1"/>
    <property type="match status" value="1"/>
</dbReference>
<dbReference type="PROSITE" id="PS01348">
    <property type="entry name" value="MRAY_2"/>
    <property type="match status" value="1"/>
</dbReference>
<keyword id="KW-0131">Cell cycle</keyword>
<keyword id="KW-0132">Cell division</keyword>
<keyword id="KW-0997">Cell inner membrane</keyword>
<keyword id="KW-1003">Cell membrane</keyword>
<keyword id="KW-0133">Cell shape</keyword>
<keyword id="KW-0961">Cell wall biogenesis/degradation</keyword>
<keyword id="KW-0460">Magnesium</keyword>
<keyword id="KW-0472">Membrane</keyword>
<keyword id="KW-0479">Metal-binding</keyword>
<keyword id="KW-0573">Peptidoglycan synthesis</keyword>
<keyword id="KW-1185">Reference proteome</keyword>
<keyword id="KW-0808">Transferase</keyword>
<keyword id="KW-0812">Transmembrane</keyword>
<keyword id="KW-1133">Transmembrane helix</keyword>
<reference key="1">
    <citation type="submission" date="2003-03" db="EMBL/GenBank/DDBJ databases">
        <title>The complete genome sequence of Neisseria gonorrhoeae.</title>
        <authorList>
            <person name="Lewis L.A."/>
            <person name="Gillaspy A.F."/>
            <person name="McLaughlin R.E."/>
            <person name="Gipson M."/>
            <person name="Ducey T.F."/>
            <person name="Ownbey T."/>
            <person name="Hartman K."/>
            <person name="Nydick C."/>
            <person name="Carson M.B."/>
            <person name="Vaughn J."/>
            <person name="Thomson C."/>
            <person name="Song L."/>
            <person name="Lin S."/>
            <person name="Yuan X."/>
            <person name="Najar F."/>
            <person name="Zhan M."/>
            <person name="Ren Q."/>
            <person name="Zhu H."/>
            <person name="Qi S."/>
            <person name="Kenton S.M."/>
            <person name="Lai H."/>
            <person name="White J.D."/>
            <person name="Clifton S."/>
            <person name="Roe B.A."/>
            <person name="Dyer D.W."/>
        </authorList>
    </citation>
    <scope>NUCLEOTIDE SEQUENCE [LARGE SCALE GENOMIC DNA]</scope>
    <source>
        <strain>ATCC 700825 / FA 1090</strain>
    </source>
</reference>